<reference key="1">
    <citation type="journal article" date="2008" name="Genome Res.">
        <title>Comparative genome analysis of Salmonella enteritidis PT4 and Salmonella gallinarum 287/91 provides insights into evolutionary and host adaptation pathways.</title>
        <authorList>
            <person name="Thomson N.R."/>
            <person name="Clayton D.J."/>
            <person name="Windhorst D."/>
            <person name="Vernikos G."/>
            <person name="Davidson S."/>
            <person name="Churcher C."/>
            <person name="Quail M.A."/>
            <person name="Stevens M."/>
            <person name="Jones M.A."/>
            <person name="Watson M."/>
            <person name="Barron A."/>
            <person name="Layton A."/>
            <person name="Pickard D."/>
            <person name="Kingsley R.A."/>
            <person name="Bignell A."/>
            <person name="Clark L."/>
            <person name="Harris B."/>
            <person name="Ormond D."/>
            <person name="Abdellah Z."/>
            <person name="Brooks K."/>
            <person name="Cherevach I."/>
            <person name="Chillingworth T."/>
            <person name="Woodward J."/>
            <person name="Norberczak H."/>
            <person name="Lord A."/>
            <person name="Arrowsmith C."/>
            <person name="Jagels K."/>
            <person name="Moule S."/>
            <person name="Mungall K."/>
            <person name="Saunders M."/>
            <person name="Whitehead S."/>
            <person name="Chabalgoity J.A."/>
            <person name="Maskell D."/>
            <person name="Humphreys T."/>
            <person name="Roberts M."/>
            <person name="Barrow P.A."/>
            <person name="Dougan G."/>
            <person name="Parkhill J."/>
        </authorList>
    </citation>
    <scope>NUCLEOTIDE SEQUENCE [LARGE SCALE GENOMIC DNA]</scope>
    <source>
        <strain>287/91 / NCTC 13346</strain>
    </source>
</reference>
<accession>B5RG43</accession>
<evidence type="ECO:0000255" key="1">
    <source>
        <dbReference type="HAMAP-Rule" id="MF_01189"/>
    </source>
</evidence>
<organism>
    <name type="scientific">Salmonella gallinarum (strain 287/91 / NCTC 13346)</name>
    <dbReference type="NCBI Taxonomy" id="550538"/>
    <lineage>
        <taxon>Bacteria</taxon>
        <taxon>Pseudomonadati</taxon>
        <taxon>Pseudomonadota</taxon>
        <taxon>Gammaproteobacteria</taxon>
        <taxon>Enterobacterales</taxon>
        <taxon>Enterobacteriaceae</taxon>
        <taxon>Salmonella</taxon>
    </lineage>
</organism>
<protein>
    <recommendedName>
        <fullName evidence="1">Purine ribonucleoside efflux pump NepI</fullName>
    </recommendedName>
</protein>
<name>NEPI_SALG2</name>
<keyword id="KW-0050">Antiport</keyword>
<keyword id="KW-0997">Cell inner membrane</keyword>
<keyword id="KW-1003">Cell membrane</keyword>
<keyword id="KW-0472">Membrane</keyword>
<keyword id="KW-0812">Transmembrane</keyword>
<keyword id="KW-1133">Transmembrane helix</keyword>
<keyword id="KW-0813">Transport</keyword>
<sequence>MNENIAEKFRADGVARPNWSAVFAVAFCVACLITVEFLPVSLLTPMAQDLGISEGIAGQSVTVTAFVAMFSSLFITQIIQATDRRYIVILFAVLLTASCLMVSFANSFTLLLLGRACLGLALGGFWAMSASLTMRLVPARTVPKALSVIFGAVSIALVIAAPLGSFLGGIIGWRNVFNAAAVMGVLCVIWVVKSLPSLPGEPSHQKQNMFSLLQRPGVMAGMIAIFMSFAGQFAFFTYIRPVYMNLAGFDVDGLTLVLLSFGIASFVGTSFSSYVLKRSVKLALAGAPLLLALSALTLIVWGSDKTVAAVIAIIWGLAFALVPVGWSTWITRSLADQAEKAGSIQVAVIQLANTCGAAVGGYALDNFGLLSPLALSGCLMLLTALVVAAKVRITPMS</sequence>
<dbReference type="EMBL" id="AM933173">
    <property type="protein sequence ID" value="CAR39437.1"/>
    <property type="molecule type" value="Genomic_DNA"/>
</dbReference>
<dbReference type="RefSeq" id="WP_001004790.1">
    <property type="nucleotide sequence ID" value="NC_011274.1"/>
</dbReference>
<dbReference type="SMR" id="B5RG43"/>
<dbReference type="KEGG" id="seg:SG3652"/>
<dbReference type="HOGENOM" id="CLU_001265_61_1_6"/>
<dbReference type="Proteomes" id="UP000008321">
    <property type="component" value="Chromosome"/>
</dbReference>
<dbReference type="GO" id="GO:0005886">
    <property type="term" value="C:plasma membrane"/>
    <property type="evidence" value="ECO:0007669"/>
    <property type="project" value="UniProtKB-SubCell"/>
</dbReference>
<dbReference type="GO" id="GO:0015297">
    <property type="term" value="F:antiporter activity"/>
    <property type="evidence" value="ECO:0007669"/>
    <property type="project" value="UniProtKB-KW"/>
</dbReference>
<dbReference type="GO" id="GO:0015211">
    <property type="term" value="F:purine nucleoside transmembrane transporter activity"/>
    <property type="evidence" value="ECO:0007669"/>
    <property type="project" value="UniProtKB-UniRule"/>
</dbReference>
<dbReference type="CDD" id="cd17324">
    <property type="entry name" value="MFS_NepI_like"/>
    <property type="match status" value="1"/>
</dbReference>
<dbReference type="FunFam" id="1.20.1250.20:FF:000113">
    <property type="entry name" value="Purine ribonucleoside efflux pump NepI"/>
    <property type="match status" value="1"/>
</dbReference>
<dbReference type="Gene3D" id="1.20.1250.20">
    <property type="entry name" value="MFS general substrate transporter like domains"/>
    <property type="match status" value="1"/>
</dbReference>
<dbReference type="HAMAP" id="MF_01189">
    <property type="entry name" value="MFS_NepI"/>
    <property type="match status" value="1"/>
</dbReference>
<dbReference type="InterPro" id="IPR011701">
    <property type="entry name" value="MFS"/>
</dbReference>
<dbReference type="InterPro" id="IPR020846">
    <property type="entry name" value="MFS_dom"/>
</dbReference>
<dbReference type="InterPro" id="IPR050189">
    <property type="entry name" value="MFS_Efflux_Transporters"/>
</dbReference>
<dbReference type="InterPro" id="IPR023680">
    <property type="entry name" value="MFS_NepI"/>
</dbReference>
<dbReference type="InterPro" id="IPR036259">
    <property type="entry name" value="MFS_trans_sf"/>
</dbReference>
<dbReference type="NCBIfam" id="NF007578">
    <property type="entry name" value="PRK10213.1"/>
    <property type="match status" value="1"/>
</dbReference>
<dbReference type="PANTHER" id="PTHR43124">
    <property type="entry name" value="PURINE EFFLUX PUMP PBUE"/>
    <property type="match status" value="1"/>
</dbReference>
<dbReference type="PANTHER" id="PTHR43124:SF5">
    <property type="entry name" value="PURINE RIBONUCLEOSIDE EFFLUX PUMP NEPI"/>
    <property type="match status" value="1"/>
</dbReference>
<dbReference type="Pfam" id="PF07690">
    <property type="entry name" value="MFS_1"/>
    <property type="match status" value="1"/>
</dbReference>
<dbReference type="SUPFAM" id="SSF103473">
    <property type="entry name" value="MFS general substrate transporter"/>
    <property type="match status" value="1"/>
</dbReference>
<dbReference type="PROSITE" id="PS50850">
    <property type="entry name" value="MFS"/>
    <property type="match status" value="1"/>
</dbReference>
<proteinExistence type="inferred from homology"/>
<feature type="chain" id="PRO_1000138357" description="Purine ribonucleoside efflux pump NepI">
    <location>
        <begin position="1"/>
        <end position="397"/>
    </location>
</feature>
<feature type="topological domain" description="Cytoplasmic" evidence="1">
    <location>
        <begin position="1"/>
        <end position="21"/>
    </location>
</feature>
<feature type="transmembrane region" description="Helical" evidence="1">
    <location>
        <begin position="22"/>
        <end position="42"/>
    </location>
</feature>
<feature type="topological domain" description="Periplasmic" evidence="1">
    <location>
        <begin position="43"/>
        <end position="54"/>
    </location>
</feature>
<feature type="transmembrane region" description="Helical" evidence="1">
    <location>
        <begin position="55"/>
        <end position="75"/>
    </location>
</feature>
<feature type="topological domain" description="Cytoplasmic" evidence="1">
    <location>
        <begin position="76"/>
        <end position="85"/>
    </location>
</feature>
<feature type="transmembrane region" description="Helical" evidence="1">
    <location>
        <begin position="86"/>
        <end position="106"/>
    </location>
</feature>
<feature type="topological domain" description="Periplasmic" evidence="1">
    <location>
        <position position="107"/>
    </location>
</feature>
<feature type="transmembrane region" description="Helical" evidence="1">
    <location>
        <begin position="108"/>
        <end position="128"/>
    </location>
</feature>
<feature type="topological domain" description="Cytoplasmic" evidence="1">
    <location>
        <begin position="129"/>
        <end position="147"/>
    </location>
</feature>
<feature type="transmembrane region" description="Helical" evidence="1">
    <location>
        <begin position="148"/>
        <end position="168"/>
    </location>
</feature>
<feature type="topological domain" description="Periplasmic" evidence="1">
    <location>
        <begin position="169"/>
        <end position="175"/>
    </location>
</feature>
<feature type="transmembrane region" description="Helical" evidence="1">
    <location>
        <begin position="176"/>
        <end position="196"/>
    </location>
</feature>
<feature type="topological domain" description="Cytoplasmic" evidence="1">
    <location>
        <begin position="197"/>
        <end position="215"/>
    </location>
</feature>
<feature type="transmembrane region" description="Helical" evidence="1">
    <location>
        <begin position="216"/>
        <end position="236"/>
    </location>
</feature>
<feature type="topological domain" description="Periplasmic" evidence="1">
    <location>
        <begin position="237"/>
        <end position="255"/>
    </location>
</feature>
<feature type="transmembrane region" description="Helical" evidence="1">
    <location>
        <begin position="256"/>
        <end position="276"/>
    </location>
</feature>
<feature type="topological domain" description="Cytoplasmic" evidence="1">
    <location>
        <begin position="277"/>
        <end position="281"/>
    </location>
</feature>
<feature type="transmembrane region" description="Helical" evidence="1">
    <location>
        <begin position="282"/>
        <end position="302"/>
    </location>
</feature>
<feature type="topological domain" description="Periplasmic" evidence="1">
    <location>
        <begin position="303"/>
        <end position="305"/>
    </location>
</feature>
<feature type="transmembrane region" description="Helical" evidence="1">
    <location>
        <begin position="306"/>
        <end position="326"/>
    </location>
</feature>
<feature type="topological domain" description="Cytoplasmic" evidence="1">
    <location>
        <begin position="327"/>
        <end position="343"/>
    </location>
</feature>
<feature type="transmembrane region" description="Helical" evidence="1">
    <location>
        <begin position="344"/>
        <end position="364"/>
    </location>
</feature>
<feature type="topological domain" description="Periplasmic" evidence="1">
    <location>
        <begin position="365"/>
        <end position="366"/>
    </location>
</feature>
<feature type="transmembrane region" description="Helical" evidence="1">
    <location>
        <begin position="367"/>
        <end position="387"/>
    </location>
</feature>
<feature type="topological domain" description="Cytoplasmic" evidence="1">
    <location>
        <begin position="388"/>
        <end position="397"/>
    </location>
</feature>
<comment type="function">
    <text evidence="1">Involved in the efflux of purine ribonucleosides, such as inosine and guanosine.</text>
</comment>
<comment type="catalytic activity">
    <reaction evidence="1">
        <text>inosine(in) + H(+)(out) = inosine(out) + H(+)(in)</text>
        <dbReference type="Rhea" id="RHEA:29211"/>
        <dbReference type="ChEBI" id="CHEBI:15378"/>
        <dbReference type="ChEBI" id="CHEBI:17596"/>
    </reaction>
    <physiologicalReaction direction="left-to-right" evidence="1">
        <dbReference type="Rhea" id="RHEA:29212"/>
    </physiologicalReaction>
</comment>
<comment type="catalytic activity">
    <reaction evidence="1">
        <text>guanosine(in) + H(+)(out) = guanosine(out) + H(+)(in)</text>
        <dbReference type="Rhea" id="RHEA:29583"/>
        <dbReference type="ChEBI" id="CHEBI:15378"/>
        <dbReference type="ChEBI" id="CHEBI:16750"/>
    </reaction>
    <physiologicalReaction direction="left-to-right" evidence="1">
        <dbReference type="Rhea" id="RHEA:29584"/>
    </physiologicalReaction>
</comment>
<comment type="subcellular location">
    <subcellularLocation>
        <location evidence="1">Cell inner membrane</location>
        <topology evidence="1">Multi-pass membrane protein</topology>
    </subcellularLocation>
</comment>
<comment type="similarity">
    <text evidence="1">Belongs to the major facilitator superfamily. DHA1 family. NepI (TC 2.A.1.2.26) subfamily.</text>
</comment>
<gene>
    <name evidence="1" type="primary">nepI</name>
    <name type="ordered locus">SG3652</name>
</gene>